<dbReference type="EMBL" id="AM039952">
    <property type="protein sequence ID" value="CAJ22778.1"/>
    <property type="molecule type" value="Genomic_DNA"/>
</dbReference>
<dbReference type="RefSeq" id="WP_002814322.1">
    <property type="nucleotide sequence ID" value="NZ_CP017190.1"/>
</dbReference>
<dbReference type="SMR" id="Q3BWI5"/>
<dbReference type="STRING" id="456327.BJD11_16920"/>
<dbReference type="GeneID" id="97509460"/>
<dbReference type="KEGG" id="xcv:XCV1147"/>
<dbReference type="eggNOG" id="COG0236">
    <property type="taxonomic scope" value="Bacteria"/>
</dbReference>
<dbReference type="HOGENOM" id="CLU_108696_5_1_6"/>
<dbReference type="UniPathway" id="UPA00094"/>
<dbReference type="Proteomes" id="UP000007069">
    <property type="component" value="Chromosome"/>
</dbReference>
<dbReference type="GO" id="GO:0005829">
    <property type="term" value="C:cytosol"/>
    <property type="evidence" value="ECO:0007669"/>
    <property type="project" value="TreeGrafter"/>
</dbReference>
<dbReference type="GO" id="GO:0016020">
    <property type="term" value="C:membrane"/>
    <property type="evidence" value="ECO:0007669"/>
    <property type="project" value="GOC"/>
</dbReference>
<dbReference type="GO" id="GO:0000035">
    <property type="term" value="F:acyl binding"/>
    <property type="evidence" value="ECO:0007669"/>
    <property type="project" value="TreeGrafter"/>
</dbReference>
<dbReference type="GO" id="GO:0000036">
    <property type="term" value="F:acyl carrier activity"/>
    <property type="evidence" value="ECO:0007669"/>
    <property type="project" value="UniProtKB-UniRule"/>
</dbReference>
<dbReference type="GO" id="GO:0009245">
    <property type="term" value="P:lipid A biosynthetic process"/>
    <property type="evidence" value="ECO:0007669"/>
    <property type="project" value="TreeGrafter"/>
</dbReference>
<dbReference type="FunFam" id="1.10.1200.10:FF:000001">
    <property type="entry name" value="Acyl carrier protein"/>
    <property type="match status" value="1"/>
</dbReference>
<dbReference type="Gene3D" id="1.10.1200.10">
    <property type="entry name" value="ACP-like"/>
    <property type="match status" value="1"/>
</dbReference>
<dbReference type="HAMAP" id="MF_01217">
    <property type="entry name" value="Acyl_carrier"/>
    <property type="match status" value="1"/>
</dbReference>
<dbReference type="InterPro" id="IPR003231">
    <property type="entry name" value="ACP"/>
</dbReference>
<dbReference type="InterPro" id="IPR036736">
    <property type="entry name" value="ACP-like_sf"/>
</dbReference>
<dbReference type="InterPro" id="IPR009081">
    <property type="entry name" value="PP-bd_ACP"/>
</dbReference>
<dbReference type="InterPro" id="IPR006162">
    <property type="entry name" value="Ppantetheine_attach_site"/>
</dbReference>
<dbReference type="NCBIfam" id="TIGR00517">
    <property type="entry name" value="acyl_carrier"/>
    <property type="match status" value="1"/>
</dbReference>
<dbReference type="NCBIfam" id="NF002148">
    <property type="entry name" value="PRK00982.1-2"/>
    <property type="match status" value="1"/>
</dbReference>
<dbReference type="NCBIfam" id="NF002149">
    <property type="entry name" value="PRK00982.1-3"/>
    <property type="match status" value="1"/>
</dbReference>
<dbReference type="NCBIfam" id="NF002150">
    <property type="entry name" value="PRK00982.1-4"/>
    <property type="match status" value="1"/>
</dbReference>
<dbReference type="NCBIfam" id="NF002151">
    <property type="entry name" value="PRK00982.1-5"/>
    <property type="match status" value="1"/>
</dbReference>
<dbReference type="PANTHER" id="PTHR20863">
    <property type="entry name" value="ACYL CARRIER PROTEIN"/>
    <property type="match status" value="1"/>
</dbReference>
<dbReference type="PANTHER" id="PTHR20863:SF76">
    <property type="entry name" value="CARRIER DOMAIN-CONTAINING PROTEIN"/>
    <property type="match status" value="1"/>
</dbReference>
<dbReference type="Pfam" id="PF00550">
    <property type="entry name" value="PP-binding"/>
    <property type="match status" value="1"/>
</dbReference>
<dbReference type="SUPFAM" id="SSF47336">
    <property type="entry name" value="ACP-like"/>
    <property type="match status" value="1"/>
</dbReference>
<dbReference type="PROSITE" id="PS50075">
    <property type="entry name" value="CARRIER"/>
    <property type="match status" value="1"/>
</dbReference>
<dbReference type="PROSITE" id="PS00012">
    <property type="entry name" value="PHOSPHOPANTETHEINE"/>
    <property type="match status" value="1"/>
</dbReference>
<accession>Q3BWI5</accession>
<evidence type="ECO:0000255" key="1">
    <source>
        <dbReference type="HAMAP-Rule" id="MF_01217"/>
    </source>
</evidence>
<evidence type="ECO:0000255" key="2">
    <source>
        <dbReference type="PROSITE-ProRule" id="PRU00258"/>
    </source>
</evidence>
<proteinExistence type="inferred from homology"/>
<keyword id="KW-0963">Cytoplasm</keyword>
<keyword id="KW-0275">Fatty acid biosynthesis</keyword>
<keyword id="KW-0276">Fatty acid metabolism</keyword>
<keyword id="KW-0444">Lipid biosynthesis</keyword>
<keyword id="KW-0443">Lipid metabolism</keyword>
<keyword id="KW-0596">Phosphopantetheine</keyword>
<keyword id="KW-0597">Phosphoprotein</keyword>
<comment type="function">
    <text evidence="1">Carrier of the growing fatty acid chain in fatty acid biosynthesis.</text>
</comment>
<comment type="pathway">
    <text evidence="1">Lipid metabolism; fatty acid biosynthesis.</text>
</comment>
<comment type="subcellular location">
    <subcellularLocation>
        <location evidence="1">Cytoplasm</location>
    </subcellularLocation>
</comment>
<comment type="PTM">
    <text evidence="1">4'-phosphopantetheine is transferred from CoA to a specific serine of apo-ACP by AcpS. This modification is essential for activity because fatty acids are bound in thioester linkage to the sulfhydryl of the prosthetic group.</text>
</comment>
<comment type="similarity">
    <text evidence="1">Belongs to the acyl carrier protein (ACP) family.</text>
</comment>
<gene>
    <name evidence="1" type="primary">acpP</name>
    <name type="ordered locus">XCV1147</name>
</gene>
<organism>
    <name type="scientific">Xanthomonas euvesicatoria pv. vesicatoria (strain 85-10)</name>
    <name type="common">Xanthomonas campestris pv. vesicatoria</name>
    <dbReference type="NCBI Taxonomy" id="316273"/>
    <lineage>
        <taxon>Bacteria</taxon>
        <taxon>Pseudomonadati</taxon>
        <taxon>Pseudomonadota</taxon>
        <taxon>Gammaproteobacteria</taxon>
        <taxon>Lysobacterales</taxon>
        <taxon>Lysobacteraceae</taxon>
        <taxon>Xanthomonas</taxon>
    </lineage>
</organism>
<name>ACP_XANE5</name>
<sequence>MSTIEERVKKIVVEQLGVKEEEVTTSASFVDDLGADSLDTVELVMALEEEFECEIPDEEAEKITSVQQAIDYVKAHVKS</sequence>
<protein>
    <recommendedName>
        <fullName evidence="1">Acyl carrier protein</fullName>
        <shortName evidence="1">ACP</shortName>
    </recommendedName>
</protein>
<reference key="1">
    <citation type="journal article" date="2005" name="J. Bacteriol.">
        <title>Insights into genome plasticity and pathogenicity of the plant pathogenic Bacterium Xanthomonas campestris pv. vesicatoria revealed by the complete genome sequence.</title>
        <authorList>
            <person name="Thieme F."/>
            <person name="Koebnik R."/>
            <person name="Bekel T."/>
            <person name="Berger C."/>
            <person name="Boch J."/>
            <person name="Buettner D."/>
            <person name="Caldana C."/>
            <person name="Gaigalat L."/>
            <person name="Goesmann A."/>
            <person name="Kay S."/>
            <person name="Kirchner O."/>
            <person name="Lanz C."/>
            <person name="Linke B."/>
            <person name="McHardy A.C."/>
            <person name="Meyer F."/>
            <person name="Mittenhuber G."/>
            <person name="Nies D.H."/>
            <person name="Niesbach-Kloesgen U."/>
            <person name="Patschkowski T."/>
            <person name="Rueckert C."/>
            <person name="Rupp O."/>
            <person name="Schneiker S."/>
            <person name="Schuster S.C."/>
            <person name="Vorhoelter F.J."/>
            <person name="Weber E."/>
            <person name="Puehler A."/>
            <person name="Bonas U."/>
            <person name="Bartels D."/>
            <person name="Kaiser O."/>
        </authorList>
    </citation>
    <scope>NUCLEOTIDE SEQUENCE [LARGE SCALE GENOMIC DNA]</scope>
    <source>
        <strain>85-10</strain>
    </source>
</reference>
<feature type="chain" id="PRO_1000066717" description="Acyl carrier protein">
    <location>
        <begin position="1"/>
        <end position="79"/>
    </location>
</feature>
<feature type="domain" description="Carrier" evidence="2">
    <location>
        <begin position="2"/>
        <end position="77"/>
    </location>
</feature>
<feature type="modified residue" description="O-(pantetheine 4'-phosphoryl)serine" evidence="2">
    <location>
        <position position="37"/>
    </location>
</feature>